<proteinExistence type="inferred from homology"/>
<protein>
    <recommendedName>
        <fullName evidence="1">Probable inorganic carbon transporter subunit DabA 2</fullName>
    </recommendedName>
</protein>
<organism>
    <name type="scientific">Nitrobacter winogradskyi (strain ATCC 25391 / DSM 10237 / CIP 104748 / NCIMB 11846 / Nb-255)</name>
    <dbReference type="NCBI Taxonomy" id="323098"/>
    <lineage>
        <taxon>Bacteria</taxon>
        <taxon>Pseudomonadati</taxon>
        <taxon>Pseudomonadota</taxon>
        <taxon>Alphaproteobacteria</taxon>
        <taxon>Hyphomicrobiales</taxon>
        <taxon>Nitrobacteraceae</taxon>
        <taxon>Nitrobacter</taxon>
    </lineage>
</organism>
<keyword id="KW-0997">Cell inner membrane</keyword>
<keyword id="KW-1003">Cell membrane</keyword>
<keyword id="KW-0472">Membrane</keyword>
<keyword id="KW-0479">Metal-binding</keyword>
<keyword id="KW-1185">Reference proteome</keyword>
<keyword id="KW-0813">Transport</keyword>
<keyword id="KW-0862">Zinc</keyword>
<feature type="chain" id="PRO_0000387280" description="Probable inorganic carbon transporter subunit DabA 2">
    <location>
        <begin position="1"/>
        <end position="1037"/>
    </location>
</feature>
<feature type="binding site" evidence="1">
    <location>
        <position position="460"/>
    </location>
    <ligand>
        <name>Zn(2+)</name>
        <dbReference type="ChEBI" id="CHEBI:29105"/>
    </ligand>
</feature>
<feature type="binding site" evidence="1">
    <location>
        <position position="462"/>
    </location>
    <ligand>
        <name>Zn(2+)</name>
        <dbReference type="ChEBI" id="CHEBI:29105"/>
    </ligand>
</feature>
<feature type="binding site" evidence="1">
    <location>
        <position position="719"/>
    </location>
    <ligand>
        <name>Zn(2+)</name>
        <dbReference type="ChEBI" id="CHEBI:29105"/>
    </ligand>
</feature>
<feature type="binding site" evidence="1">
    <location>
        <position position="734"/>
    </location>
    <ligand>
        <name>Zn(2+)</name>
        <dbReference type="ChEBI" id="CHEBI:29105"/>
    </ligand>
</feature>
<accession>Q3SQW4</accession>
<sequence>MVDALNLGRRLRVRSTAYVASELVPFFWPMRNFISRNPLRRLESMPFEQAVRRGAALFHARMFLPRGDYQRWRREGKVRPETLDEEIGRRSQDLPPVPGVDWPRWLHALMQTPHDRDAVVRGVRAKDVHAALRGHPPSAQAVDVAALLPELEQRLHARTLPEAVDALWGTGLADELDDLVIKSYLDFFDEDQSAWRMPGRERGLFSAWSEVTRRNARMVLRRLHVRHILDHVQDAESAVVYVMEEMGIGAEAWPTYFTRVLTRLHGWTGFVRWRASAKHYYWAQQYPADIVDLLAIRLVMGLALLQESARHRGTPMRRDDLGAVVRERGAECVLRYALHSGEVLPDWAQRIDDTLSRGNGARCHDLLQRYWPLWQARLGQQQAAALRELAAAANATAALDALAPEDVEGLLQGLRDFAPQEGMVWTLAMEGQAIDKLLTQVQAPQDPPPDKRPFAQALFCIDVRAEPIRRHLERVGNYQTFGIAGFFGVPVGFLGYGKGSESHYCPAVITPKNLVLELPAALDPHNEDFVSTLGHVLHDLKKSVLSPYVTVEAVGMLFGLDLFGKTLAPLGYSRWRRRIDTEKPVTRLLVDKLSREQADSIIRTLQRAMIVKALHTELKIERERVDSGIIRELREIALRRRDGPTRLRTTFGVPQTQETEFIDKLRQVYGVDADYTNHQLERLGRIGYSLDEQVNYVHTALTMIGLTQTFSRFVLVVGHGGKTENNPYESALDCGACGGASGIVNARVFAQMANKAAVRERLAAMGITIPEDTWFMPALHVTTTDAIELFDLDLLPPRHLVYLERLRNSLRAASRLTAAERMPKLLPEAKALEPAEALRLANRLAVDWAQVRPEWGLSGNVYGIVGRRALTENSDLQGSAFLLSYDWRCDPRGRLLENLLTGPVVVGQWINLEYFFSTVDNSRLGSGSKVYHNVSGRFGVMTGSLSDLRTGLPMQTVMREGRPYHEPMRLIALIEAPLDFAGRVLERVVKVKSLVLGGWIRAIVIDPTQGYKPFVFNNGQWEERTPLIAPAEKEYSA</sequence>
<gene>
    <name evidence="1" type="primary">dabA2</name>
    <name type="ordered locus">Nwi_2069</name>
</gene>
<evidence type="ECO:0000255" key="1">
    <source>
        <dbReference type="HAMAP-Rule" id="MF_01871"/>
    </source>
</evidence>
<reference key="1">
    <citation type="journal article" date="2006" name="Appl. Environ. Microbiol.">
        <title>Genome sequence of the chemolithoautotrophic nitrite-oxidizing bacterium Nitrobacter winogradskyi Nb-255.</title>
        <authorList>
            <person name="Starkenburg S.R."/>
            <person name="Chain P.S.G."/>
            <person name="Sayavedra-Soto L.A."/>
            <person name="Hauser L."/>
            <person name="Land M.L."/>
            <person name="Larimer F.W."/>
            <person name="Malfatti S.A."/>
            <person name="Klotz M.G."/>
            <person name="Bottomley P.J."/>
            <person name="Arp D.J."/>
            <person name="Hickey W.J."/>
        </authorList>
    </citation>
    <scope>NUCLEOTIDE SEQUENCE [LARGE SCALE GENOMIC DNA]</scope>
    <source>
        <strain>ATCC 25391 / DSM 10237 / CIP 104748 / NCIMB 11846 / Nb-255</strain>
    </source>
</reference>
<comment type="function">
    <text evidence="1">Part of an energy-coupled inorganic carbon pump.</text>
</comment>
<comment type="cofactor">
    <cofactor evidence="1">
        <name>Zn(2+)</name>
        <dbReference type="ChEBI" id="CHEBI:29105"/>
    </cofactor>
</comment>
<comment type="subunit">
    <text evidence="1">Forms a complex with DabB.</text>
</comment>
<comment type="subcellular location">
    <subcellularLocation>
        <location evidence="1">Cell inner membrane</location>
        <topology evidence="1">Peripheral membrane protein</topology>
    </subcellularLocation>
</comment>
<comment type="similarity">
    <text evidence="1">Belongs to the inorganic carbon transporter (TC 9.A.2) DabA family.</text>
</comment>
<name>DABA2_NITWN</name>
<dbReference type="EMBL" id="CP000115">
    <property type="protein sequence ID" value="ABA05327.1"/>
    <property type="molecule type" value="Genomic_DNA"/>
</dbReference>
<dbReference type="STRING" id="323098.Nwi_2069"/>
<dbReference type="KEGG" id="nwi:Nwi_2069"/>
<dbReference type="eggNOG" id="COG3002">
    <property type="taxonomic scope" value="Bacteria"/>
</dbReference>
<dbReference type="HOGENOM" id="CLU_009885_0_0_5"/>
<dbReference type="OrthoDB" id="9805101at2"/>
<dbReference type="Proteomes" id="UP000002531">
    <property type="component" value="Chromosome"/>
</dbReference>
<dbReference type="GO" id="GO:0005886">
    <property type="term" value="C:plasma membrane"/>
    <property type="evidence" value="ECO:0007669"/>
    <property type="project" value="UniProtKB-SubCell"/>
</dbReference>
<dbReference type="GO" id="GO:0008270">
    <property type="term" value="F:zinc ion binding"/>
    <property type="evidence" value="ECO:0007669"/>
    <property type="project" value="UniProtKB-UniRule"/>
</dbReference>
<dbReference type="HAMAP" id="MF_01871">
    <property type="entry name" value="DabA"/>
    <property type="match status" value="1"/>
</dbReference>
<dbReference type="InterPro" id="IPR018752">
    <property type="entry name" value="DabA"/>
</dbReference>
<dbReference type="PANTHER" id="PTHR38344:SF1">
    <property type="entry name" value="INORGANIC CARBON TRANSPORTER SUBUNIT DABA-RELATED"/>
    <property type="match status" value="1"/>
</dbReference>
<dbReference type="PANTHER" id="PTHR38344">
    <property type="entry name" value="UPF0753 PROTEIN AQ_863"/>
    <property type="match status" value="1"/>
</dbReference>
<dbReference type="Pfam" id="PF10070">
    <property type="entry name" value="DabA"/>
    <property type="match status" value="1"/>
</dbReference>